<dbReference type="EC" id="4.99.1.9" evidence="1 9 11"/>
<dbReference type="EMBL" id="M97208">
    <property type="protein sequence ID" value="AAA22518.1"/>
    <property type="molecule type" value="Genomic_DNA"/>
</dbReference>
<dbReference type="EMBL" id="Y14083">
    <property type="protein sequence ID" value="CAA74519.1"/>
    <property type="molecule type" value="Genomic_DNA"/>
</dbReference>
<dbReference type="EMBL" id="AL009126">
    <property type="protein sequence ID" value="CAB12853.1"/>
    <property type="molecule type" value="Genomic_DNA"/>
</dbReference>
<dbReference type="PIR" id="C47045">
    <property type="entry name" value="C47045"/>
</dbReference>
<dbReference type="RefSeq" id="NP_388894.1">
    <property type="nucleotide sequence ID" value="NC_000964.3"/>
</dbReference>
<dbReference type="RefSeq" id="WP_003244736.1">
    <property type="nucleotide sequence ID" value="NZ_OZ025638.1"/>
</dbReference>
<dbReference type="PDB" id="1AK1">
    <property type="method" value="X-ray"/>
    <property type="resolution" value="1.90 A"/>
    <property type="chains" value="A=1-310"/>
</dbReference>
<dbReference type="PDB" id="1C1H">
    <property type="method" value="X-ray"/>
    <property type="resolution" value="1.90 A"/>
    <property type="chains" value="A=1-310"/>
</dbReference>
<dbReference type="PDB" id="1C9E">
    <property type="method" value="X-ray"/>
    <property type="resolution" value="2.30 A"/>
    <property type="chains" value="A=5-310"/>
</dbReference>
<dbReference type="PDB" id="1DOZ">
    <property type="method" value="X-ray"/>
    <property type="resolution" value="1.80 A"/>
    <property type="chains" value="A=2-310"/>
</dbReference>
<dbReference type="PDB" id="1LD3">
    <property type="method" value="X-ray"/>
    <property type="resolution" value="2.60 A"/>
    <property type="chains" value="A=1-310"/>
</dbReference>
<dbReference type="PDB" id="1N0I">
    <property type="method" value="X-ray"/>
    <property type="resolution" value="2.00 A"/>
    <property type="chains" value="A=1-310"/>
</dbReference>
<dbReference type="PDB" id="2AC2">
    <property type="method" value="X-ray"/>
    <property type="resolution" value="2.50 A"/>
    <property type="chains" value="A=2-310"/>
</dbReference>
<dbReference type="PDB" id="2AC4">
    <property type="method" value="X-ray"/>
    <property type="resolution" value="2.10 A"/>
    <property type="chains" value="A=2-310"/>
</dbReference>
<dbReference type="PDB" id="2H1V">
    <property type="method" value="X-ray"/>
    <property type="resolution" value="1.20 A"/>
    <property type="chains" value="A=1-310"/>
</dbReference>
<dbReference type="PDB" id="2H1W">
    <property type="method" value="X-ray"/>
    <property type="resolution" value="2.60 A"/>
    <property type="chains" value="A=1-310"/>
</dbReference>
<dbReference type="PDB" id="2HK6">
    <property type="method" value="X-ray"/>
    <property type="resolution" value="1.71 A"/>
    <property type="chains" value="A=1-310"/>
</dbReference>
<dbReference type="PDB" id="2Q2N">
    <property type="method" value="X-ray"/>
    <property type="resolution" value="1.80 A"/>
    <property type="chains" value="A=2-310"/>
</dbReference>
<dbReference type="PDB" id="2Q2O">
    <property type="method" value="X-ray"/>
    <property type="resolution" value="2.10 A"/>
    <property type="chains" value="A=2-310"/>
</dbReference>
<dbReference type="PDB" id="2Q3J">
    <property type="method" value="X-ray"/>
    <property type="resolution" value="2.39 A"/>
    <property type="chains" value="A=2-310"/>
</dbReference>
<dbReference type="PDB" id="3GOQ">
    <property type="method" value="X-ray"/>
    <property type="resolution" value="1.60 A"/>
    <property type="chains" value="A=1-310"/>
</dbReference>
<dbReference type="PDB" id="3M4Z">
    <property type="method" value="X-ray"/>
    <property type="resolution" value="1.94 A"/>
    <property type="chains" value="A=2-310"/>
</dbReference>
<dbReference type="PDBsum" id="1AK1"/>
<dbReference type="PDBsum" id="1C1H"/>
<dbReference type="PDBsum" id="1C9E"/>
<dbReference type="PDBsum" id="1DOZ"/>
<dbReference type="PDBsum" id="1LD3"/>
<dbReference type="PDBsum" id="1N0I"/>
<dbReference type="PDBsum" id="2AC2"/>
<dbReference type="PDBsum" id="2AC4"/>
<dbReference type="PDBsum" id="2H1V"/>
<dbReference type="PDBsum" id="2H1W"/>
<dbReference type="PDBsum" id="2HK6"/>
<dbReference type="PDBsum" id="2Q2N"/>
<dbReference type="PDBsum" id="2Q2O"/>
<dbReference type="PDBsum" id="2Q3J"/>
<dbReference type="PDBsum" id="3GOQ"/>
<dbReference type="PDBsum" id="3M4Z"/>
<dbReference type="SMR" id="P32396"/>
<dbReference type="FunCoup" id="P32396">
    <property type="interactions" value="712"/>
</dbReference>
<dbReference type="STRING" id="224308.BSU10130"/>
<dbReference type="DrugBank" id="DB01911">
    <property type="generic name" value="N-Methylmesoporphyrin"/>
</dbReference>
<dbReference type="DrugBank" id="DB02188">
    <property type="generic name" value="N-Methylmesoporphyrin containing copper"/>
</dbReference>
<dbReference type="jPOST" id="P32396"/>
<dbReference type="PaxDb" id="224308-BSU10130"/>
<dbReference type="EnsemblBacteria" id="CAB12853">
    <property type="protein sequence ID" value="CAB12853"/>
    <property type="gene ID" value="BSU_10130"/>
</dbReference>
<dbReference type="GeneID" id="939772"/>
<dbReference type="KEGG" id="bsu:BSU10130"/>
<dbReference type="PATRIC" id="fig|224308.179.peg.1089"/>
<dbReference type="eggNOG" id="COG0276">
    <property type="taxonomic scope" value="Bacteria"/>
</dbReference>
<dbReference type="InParanoid" id="P32396"/>
<dbReference type="OrthoDB" id="9776380at2"/>
<dbReference type="PhylomeDB" id="P32396"/>
<dbReference type="BioCyc" id="BSUB:BSU10130-MONOMER"/>
<dbReference type="BioCyc" id="MetaCyc:BSU10130-MONOMER"/>
<dbReference type="BRENDA" id="4.99.1.1">
    <property type="organism ID" value="658"/>
</dbReference>
<dbReference type="BRENDA" id="4.99.1.9">
    <property type="organism ID" value="658"/>
</dbReference>
<dbReference type="UniPathway" id="UPA00252"/>
<dbReference type="EvolutionaryTrace" id="P32396"/>
<dbReference type="Proteomes" id="UP000001570">
    <property type="component" value="Chromosome"/>
</dbReference>
<dbReference type="GO" id="GO:0005737">
    <property type="term" value="C:cytoplasm"/>
    <property type="evidence" value="ECO:0007669"/>
    <property type="project" value="UniProtKB-SubCell"/>
</dbReference>
<dbReference type="GO" id="GO:0004325">
    <property type="term" value="F:ferrochelatase activity"/>
    <property type="evidence" value="ECO:0000318"/>
    <property type="project" value="GO_Central"/>
</dbReference>
<dbReference type="GO" id="GO:0046872">
    <property type="term" value="F:metal ion binding"/>
    <property type="evidence" value="ECO:0007669"/>
    <property type="project" value="UniProtKB-KW"/>
</dbReference>
<dbReference type="GO" id="GO:0006783">
    <property type="term" value="P:heme biosynthetic process"/>
    <property type="evidence" value="ECO:0000318"/>
    <property type="project" value="GO_Central"/>
</dbReference>
<dbReference type="CDD" id="cd00419">
    <property type="entry name" value="Ferrochelatase_C"/>
    <property type="match status" value="1"/>
</dbReference>
<dbReference type="CDD" id="cd03411">
    <property type="entry name" value="Ferrochelatase_N"/>
    <property type="match status" value="1"/>
</dbReference>
<dbReference type="FunFam" id="3.40.50.1400:FF:000009">
    <property type="entry name" value="Ferrochelatase"/>
    <property type="match status" value="1"/>
</dbReference>
<dbReference type="Gene3D" id="3.40.50.1400">
    <property type="match status" value="2"/>
</dbReference>
<dbReference type="HAMAP" id="MF_00323">
    <property type="entry name" value="Ferrochelatase"/>
    <property type="match status" value="1"/>
</dbReference>
<dbReference type="InterPro" id="IPR001015">
    <property type="entry name" value="Ferrochelatase"/>
</dbReference>
<dbReference type="InterPro" id="IPR019772">
    <property type="entry name" value="Ferrochelatase_AS"/>
</dbReference>
<dbReference type="InterPro" id="IPR033644">
    <property type="entry name" value="Ferrochelatase_C"/>
</dbReference>
<dbReference type="InterPro" id="IPR033659">
    <property type="entry name" value="Ferrochelatase_N"/>
</dbReference>
<dbReference type="NCBIfam" id="TIGR00109">
    <property type="entry name" value="hemH"/>
    <property type="match status" value="1"/>
</dbReference>
<dbReference type="NCBIfam" id="NF009095">
    <property type="entry name" value="PRK12435.1"/>
    <property type="match status" value="1"/>
</dbReference>
<dbReference type="PANTHER" id="PTHR11108">
    <property type="entry name" value="FERROCHELATASE"/>
    <property type="match status" value="1"/>
</dbReference>
<dbReference type="PANTHER" id="PTHR11108:SF1">
    <property type="entry name" value="FERROCHELATASE, MITOCHONDRIAL"/>
    <property type="match status" value="1"/>
</dbReference>
<dbReference type="Pfam" id="PF00762">
    <property type="entry name" value="Ferrochelatase"/>
    <property type="match status" value="1"/>
</dbReference>
<dbReference type="SUPFAM" id="SSF53800">
    <property type="entry name" value="Chelatase"/>
    <property type="match status" value="1"/>
</dbReference>
<dbReference type="PROSITE" id="PS00534">
    <property type="entry name" value="FERROCHELATASE"/>
    <property type="match status" value="1"/>
</dbReference>
<feature type="chain" id="PRO_0000175114" description="Coproporphyrin III ferrochelatase">
    <location>
        <begin position="1"/>
        <end position="310"/>
    </location>
</feature>
<feature type="binding site" description="axial binding residue" evidence="1">
    <location>
        <position position="13"/>
    </location>
    <ligand>
        <name>Fe-coproporphyrin III</name>
        <dbReference type="ChEBI" id="CHEBI:68438"/>
    </ligand>
    <ligandPart>
        <name>Fe</name>
        <dbReference type="ChEBI" id="CHEBI:18248"/>
    </ligandPart>
</feature>
<feature type="binding site" evidence="2 23">
    <location>
        <position position="13"/>
    </location>
    <ligand>
        <name>N-methylmesoporphyrin</name>
        <dbReference type="ChEBI" id="CHEBI:176424"/>
        <note>inhibitor</note>
    </ligand>
</feature>
<feature type="binding site" evidence="19 20">
    <location>
        <position position="20"/>
    </location>
    <ligand>
        <name>Mg(2+)</name>
        <dbReference type="ChEBI" id="CHEBI:18420"/>
    </ligand>
</feature>
<feature type="binding site" evidence="1">
    <location>
        <position position="30"/>
    </location>
    <ligand>
        <name>Fe-coproporphyrin III</name>
        <dbReference type="ChEBI" id="CHEBI:68438"/>
    </ligand>
</feature>
<feature type="binding site" evidence="2 23">
    <location>
        <begin position="31"/>
        <end position="33"/>
    </location>
    <ligand>
        <name>N-methylmesoporphyrin</name>
        <dbReference type="ChEBI" id="CHEBI:176424"/>
        <note>inhibitor</note>
    </ligand>
</feature>
<feature type="binding site" evidence="1">
    <location>
        <begin position="46"/>
        <end position="47"/>
    </location>
    <ligand>
        <name>Fe-coproporphyrin III</name>
        <dbReference type="ChEBI" id="CHEBI:68438"/>
    </ligand>
</feature>
<feature type="binding site" evidence="17">
    <location>
        <position position="46"/>
    </location>
    <ligand>
        <name>Mg(2+)</name>
        <dbReference type="ChEBI" id="CHEBI:18420"/>
    </ligand>
</feature>
<feature type="binding site" evidence="1">
    <location>
        <position position="54"/>
    </location>
    <ligand>
        <name>Fe-coproporphyrin III</name>
        <dbReference type="ChEBI" id="CHEBI:68438"/>
    </ligand>
</feature>
<feature type="binding site" evidence="1">
    <location>
        <position position="125"/>
    </location>
    <ligand>
        <name>Fe-coproporphyrin III</name>
        <dbReference type="ChEBI" id="CHEBI:68438"/>
    </ligand>
</feature>
<feature type="binding site" evidence="1 17 18 19 20">
    <location>
        <position position="183"/>
    </location>
    <ligand>
        <name>Fe(2+)</name>
        <dbReference type="ChEBI" id="CHEBI:29033"/>
    </ligand>
</feature>
<feature type="binding site" evidence="2 23">
    <location>
        <position position="183"/>
    </location>
    <ligand>
        <name>N-methylmesoporphyrin</name>
        <dbReference type="ChEBI" id="CHEBI:176424"/>
        <note>inhibitor</note>
    </ligand>
</feature>
<feature type="binding site" evidence="2 23">
    <location>
        <position position="188"/>
    </location>
    <ligand>
        <name>N-methylmesoporphyrin</name>
        <dbReference type="ChEBI" id="CHEBI:176424"/>
        <note>inhibitor</note>
    </ligand>
</feature>
<feature type="binding site" evidence="1 17 18 19 20">
    <location>
        <position position="264"/>
    </location>
    <ligand>
        <name>Fe(2+)</name>
        <dbReference type="ChEBI" id="CHEBI:29033"/>
    </ligand>
</feature>
<feature type="binding site" evidence="17">
    <location>
        <position position="268"/>
    </location>
    <ligand>
        <name>Mg(2+)</name>
        <dbReference type="ChEBI" id="CHEBI:18420"/>
    </ligand>
</feature>
<feature type="binding site" evidence="17">
    <location>
        <position position="272"/>
    </location>
    <ligand>
        <name>Mg(2+)</name>
        <dbReference type="ChEBI" id="CHEBI:18420"/>
    </ligand>
</feature>
<feature type="mutagenesis site" description="No change in activity." evidence="5">
    <original>Y</original>
    <variation>F</variation>
    <location>
        <position position="13"/>
    </location>
</feature>
<feature type="mutagenesis site" description="Changes the metal specificity of the enzyme. Can insert Co(2+) into protoporphyrin IX at a higher rate than the wild-type enzyme, but loses the ability to insert Cu(2+) and Zn(2+)." evidence="8">
    <original>Y</original>
    <variation>M</variation>
    <location>
        <position position="13"/>
    </location>
</feature>
<feature type="mutagenesis site" description="Retains 92% of activity." evidence="6">
    <original>K</original>
    <variation>A</variation>
    <location>
        <position position="87"/>
    </location>
</feature>
<feature type="mutagenesis site" description="Retains 5% of activity." evidence="6">
    <original>H</original>
    <variation>A</variation>
    <location>
        <position position="88"/>
    </location>
</feature>
<feature type="mutagenesis site" description="Loss of activity." evidence="5 6">
    <original>H</original>
    <variation>A</variation>
    <variation>C</variation>
    <location>
        <position position="183"/>
    </location>
</feature>
<feature type="mutagenesis site" description="Retains 21% of activity." evidence="6">
    <original>E</original>
    <variation>Q</variation>
    <location>
        <position position="264"/>
    </location>
</feature>
<feature type="mutagenesis site" description="Retains less than 1% of activity." evidence="6">
    <original>E</original>
    <variation>V</variation>
    <location>
        <position position="264"/>
    </location>
</feature>
<feature type="mutagenesis site" description="Abolishes the effect of Mg(2+)." evidence="3">
    <original>E</original>
    <variation>S</variation>
    <location>
        <position position="272"/>
    </location>
</feature>
<feature type="strand" evidence="40">
    <location>
        <begin position="4"/>
        <end position="12"/>
    </location>
</feature>
<feature type="helix" evidence="40">
    <location>
        <begin position="19"/>
        <end position="21"/>
    </location>
</feature>
<feature type="helix" evidence="40">
    <location>
        <begin position="22"/>
        <end position="29"/>
    </location>
</feature>
<feature type="turn" evidence="40">
    <location>
        <begin position="30"/>
        <end position="32"/>
    </location>
</feature>
<feature type="helix" evidence="40">
    <location>
        <begin position="37"/>
        <end position="49"/>
    </location>
</feature>
<feature type="helix" evidence="40">
    <location>
        <begin position="54"/>
        <end position="74"/>
    </location>
</feature>
<feature type="strand" evidence="40">
    <location>
        <begin position="76"/>
        <end position="92"/>
    </location>
</feature>
<feature type="helix" evidence="40">
    <location>
        <begin position="93"/>
        <end position="102"/>
    </location>
</feature>
<feature type="strand" evidence="40">
    <location>
        <begin position="107"/>
        <end position="116"/>
    </location>
</feature>
<feature type="turn" evidence="40">
    <location>
        <begin position="119"/>
        <end position="121"/>
    </location>
</feature>
<feature type="helix" evidence="40">
    <location>
        <begin position="122"/>
        <end position="136"/>
    </location>
</feature>
<feature type="strand" evidence="40">
    <location>
        <begin position="140"/>
        <end position="143"/>
    </location>
</feature>
<feature type="helix" evidence="40">
    <location>
        <begin position="151"/>
        <end position="167"/>
    </location>
</feature>
<feature type="helix" evidence="40">
    <location>
        <begin position="170"/>
        <end position="173"/>
    </location>
</feature>
<feature type="strand" evidence="40">
    <location>
        <begin position="175"/>
        <end position="183"/>
    </location>
</feature>
<feature type="helix" evidence="40">
    <location>
        <begin position="187"/>
        <end position="192"/>
    </location>
</feature>
<feature type="helix" evidence="40">
    <location>
        <begin position="196"/>
        <end position="211"/>
    </location>
</feature>
<feature type="strand" evidence="40">
    <location>
        <begin position="216"/>
        <end position="222"/>
    </location>
</feature>
<feature type="strand" evidence="38">
    <location>
        <begin position="226"/>
        <end position="228"/>
    </location>
</feature>
<feature type="strand" evidence="40">
    <location>
        <begin position="230"/>
        <end position="232"/>
    </location>
</feature>
<feature type="helix" evidence="40">
    <location>
        <begin position="235"/>
        <end position="246"/>
    </location>
</feature>
<feature type="strand" evidence="40">
    <location>
        <begin position="249"/>
        <end position="254"/>
    </location>
</feature>
<feature type="strand" evidence="39">
    <location>
        <begin position="260"/>
        <end position="262"/>
    </location>
</feature>
<feature type="helix" evidence="40">
    <location>
        <begin position="263"/>
        <end position="266"/>
    </location>
</feature>
<feature type="turn" evidence="40">
    <location>
        <begin position="267"/>
        <end position="271"/>
    </location>
</feature>
<feature type="helix" evidence="40">
    <location>
        <begin position="272"/>
        <end position="280"/>
    </location>
</feature>
<feature type="strand" evidence="40">
    <location>
        <begin position="283"/>
        <end position="285"/>
    </location>
</feature>
<feature type="helix" evidence="40">
    <location>
        <begin position="294"/>
        <end position="307"/>
    </location>
</feature>
<sequence length="310" mass="35348">MSRKKMGLLVMAYGTPYKEEDIERYYTHIRRGRKPEPEMLQDLKDRYEAIGGISPLAQITEQQAHNLEQHLNEIQDEITFKAYIGLKHIEPFIEDAVAEMHKDGITEAVSIVLAPHFSTFSVQSYNKRAKEEAEKLGGLTITSVESWYDEPKFVTYWVDRVKETYASMPEDERENAMLIVSAHSLPEKIKEFGDPYPDQLHESAKLIAEGAGVSEYAVGWQSEGNTPDPWLGPDVQDLTRDLFEQKGYQAFVYVPVGFVADHLEVLYDNDYECKVVTDDIGASYYRPEMPNAKPEFIDALATVVLKKLGR</sequence>
<evidence type="ECO:0000255" key="1">
    <source>
        <dbReference type="HAMAP-Rule" id="MF_00323"/>
    </source>
</evidence>
<evidence type="ECO:0000269" key="2">
    <source>
    </source>
</evidence>
<evidence type="ECO:0000269" key="3">
    <source>
    </source>
</evidence>
<evidence type="ECO:0000269" key="4">
    <source>
    </source>
</evidence>
<evidence type="ECO:0000269" key="5">
    <source>
    </source>
</evidence>
<evidence type="ECO:0000269" key="6">
    <source>
    </source>
</evidence>
<evidence type="ECO:0000269" key="7">
    <source>
    </source>
</evidence>
<evidence type="ECO:0000269" key="8">
    <source>
    </source>
</evidence>
<evidence type="ECO:0000269" key="9">
    <source>
    </source>
</evidence>
<evidence type="ECO:0000269" key="10">
    <source>
    </source>
</evidence>
<evidence type="ECO:0000269" key="11">
    <source>
    </source>
</evidence>
<evidence type="ECO:0000269" key="12">
    <source>
    </source>
</evidence>
<evidence type="ECO:0000303" key="13">
    <source>
    </source>
</evidence>
<evidence type="ECO:0000303" key="14">
    <source>
    </source>
</evidence>
<evidence type="ECO:0000303" key="15">
    <source>
    </source>
</evidence>
<evidence type="ECO:0000305" key="16"/>
<evidence type="ECO:0000305" key="17">
    <source>
    </source>
</evidence>
<evidence type="ECO:0000305" key="18">
    <source>
    </source>
</evidence>
<evidence type="ECO:0000305" key="19">
    <source>
    </source>
</evidence>
<evidence type="ECO:0000305" key="20">
    <source>
    </source>
</evidence>
<evidence type="ECO:0000305" key="21">
    <source>
    </source>
</evidence>
<evidence type="ECO:0007744" key="22">
    <source>
        <dbReference type="PDB" id="1AK1"/>
    </source>
</evidence>
<evidence type="ECO:0007744" key="23">
    <source>
        <dbReference type="PDB" id="1C1H"/>
    </source>
</evidence>
<evidence type="ECO:0007744" key="24">
    <source>
        <dbReference type="PDB" id="1C9E"/>
    </source>
</evidence>
<evidence type="ECO:0007744" key="25">
    <source>
        <dbReference type="PDB" id="1DOZ"/>
    </source>
</evidence>
<evidence type="ECO:0007744" key="26">
    <source>
        <dbReference type="PDB" id="1LD3"/>
    </source>
</evidence>
<evidence type="ECO:0007744" key="27">
    <source>
        <dbReference type="PDB" id="1N0I"/>
    </source>
</evidence>
<evidence type="ECO:0007744" key="28">
    <source>
        <dbReference type="PDB" id="2AC2"/>
    </source>
</evidence>
<evidence type="ECO:0007744" key="29">
    <source>
        <dbReference type="PDB" id="2AC4"/>
    </source>
</evidence>
<evidence type="ECO:0007744" key="30">
    <source>
        <dbReference type="PDB" id="2H1V"/>
    </source>
</evidence>
<evidence type="ECO:0007744" key="31">
    <source>
        <dbReference type="PDB" id="2H1W"/>
    </source>
</evidence>
<evidence type="ECO:0007744" key="32">
    <source>
        <dbReference type="PDB" id="2HK6"/>
    </source>
</evidence>
<evidence type="ECO:0007744" key="33">
    <source>
        <dbReference type="PDB" id="2Q2N"/>
    </source>
</evidence>
<evidence type="ECO:0007744" key="34">
    <source>
        <dbReference type="PDB" id="2Q2O"/>
    </source>
</evidence>
<evidence type="ECO:0007744" key="35">
    <source>
        <dbReference type="PDB" id="2Q3J"/>
    </source>
</evidence>
<evidence type="ECO:0007744" key="36">
    <source>
        <dbReference type="PDB" id="3GOQ"/>
    </source>
</evidence>
<evidence type="ECO:0007744" key="37">
    <source>
        <dbReference type="PDB" id="3M4Z"/>
    </source>
</evidence>
<evidence type="ECO:0007829" key="38">
    <source>
        <dbReference type="PDB" id="1C1H"/>
    </source>
</evidence>
<evidence type="ECO:0007829" key="39">
    <source>
        <dbReference type="PDB" id="1DOZ"/>
    </source>
</evidence>
<evidence type="ECO:0007829" key="40">
    <source>
        <dbReference type="PDB" id="2H1V"/>
    </source>
</evidence>
<name>CPFC_BACSU</name>
<protein>
    <recommendedName>
        <fullName evidence="1 16">Coproporphyrin III ferrochelatase</fullName>
        <ecNumber evidence="1 9 11">4.99.1.9</ecNumber>
    </recommendedName>
    <alternativeName>
        <fullName evidence="15">Water-soluble ferrochelatase</fullName>
    </alternativeName>
</protein>
<reference key="1">
    <citation type="journal article" date="1992" name="J. Bacteriol.">
        <title>Cloning and characterization of the Bacillus subtilis hemEHY gene cluster, which encodes protoheme IX biosynthetic enzymes.</title>
        <authorList>
            <person name="Hansson M."/>
            <person name="Hederstedt L."/>
        </authorList>
    </citation>
    <scope>NUCLEOTIDE SEQUENCE [GENOMIC DNA]</scope>
    <scope>FUNCTION</scope>
    <scope>PATHWAY</scope>
</reference>
<reference key="2">
    <citation type="journal article" date="1998" name="Microbiology">
        <title>The 172 kb prkA-addAB region from 83 degrees to 97 degrees of the Bacillus subtilis chromosome contains several dysfunctional genes, the glyB marker, many genes encoding transporter proteins, and the ubiquitous hit gene.</title>
        <authorList>
            <person name="Noback M.A."/>
            <person name="Holsappel S."/>
            <person name="Kiewiet R."/>
            <person name="Terpstra P."/>
            <person name="Wambutt R."/>
            <person name="Wedler H."/>
            <person name="Venema G."/>
            <person name="Bron S."/>
        </authorList>
    </citation>
    <scope>NUCLEOTIDE SEQUENCE [GENOMIC DNA]</scope>
    <source>
        <strain>168</strain>
    </source>
</reference>
<reference key="3">
    <citation type="journal article" date="1997" name="Nature">
        <title>The complete genome sequence of the Gram-positive bacterium Bacillus subtilis.</title>
        <authorList>
            <person name="Kunst F."/>
            <person name="Ogasawara N."/>
            <person name="Moszer I."/>
            <person name="Albertini A.M."/>
            <person name="Alloni G."/>
            <person name="Azevedo V."/>
            <person name="Bertero M.G."/>
            <person name="Bessieres P."/>
            <person name="Bolotin A."/>
            <person name="Borchert S."/>
            <person name="Borriss R."/>
            <person name="Boursier L."/>
            <person name="Brans A."/>
            <person name="Braun M."/>
            <person name="Brignell S.C."/>
            <person name="Bron S."/>
            <person name="Brouillet S."/>
            <person name="Bruschi C.V."/>
            <person name="Caldwell B."/>
            <person name="Capuano V."/>
            <person name="Carter N.M."/>
            <person name="Choi S.-K."/>
            <person name="Codani J.-J."/>
            <person name="Connerton I.F."/>
            <person name="Cummings N.J."/>
            <person name="Daniel R.A."/>
            <person name="Denizot F."/>
            <person name="Devine K.M."/>
            <person name="Duesterhoeft A."/>
            <person name="Ehrlich S.D."/>
            <person name="Emmerson P.T."/>
            <person name="Entian K.-D."/>
            <person name="Errington J."/>
            <person name="Fabret C."/>
            <person name="Ferrari E."/>
            <person name="Foulger D."/>
            <person name="Fritz C."/>
            <person name="Fujita M."/>
            <person name="Fujita Y."/>
            <person name="Fuma S."/>
            <person name="Galizzi A."/>
            <person name="Galleron N."/>
            <person name="Ghim S.-Y."/>
            <person name="Glaser P."/>
            <person name="Goffeau A."/>
            <person name="Golightly E.J."/>
            <person name="Grandi G."/>
            <person name="Guiseppi G."/>
            <person name="Guy B.J."/>
            <person name="Haga K."/>
            <person name="Haiech J."/>
            <person name="Harwood C.R."/>
            <person name="Henaut A."/>
            <person name="Hilbert H."/>
            <person name="Holsappel S."/>
            <person name="Hosono S."/>
            <person name="Hullo M.-F."/>
            <person name="Itaya M."/>
            <person name="Jones L.-M."/>
            <person name="Joris B."/>
            <person name="Karamata D."/>
            <person name="Kasahara Y."/>
            <person name="Klaerr-Blanchard M."/>
            <person name="Klein C."/>
            <person name="Kobayashi Y."/>
            <person name="Koetter P."/>
            <person name="Koningstein G."/>
            <person name="Krogh S."/>
            <person name="Kumano M."/>
            <person name="Kurita K."/>
            <person name="Lapidus A."/>
            <person name="Lardinois S."/>
            <person name="Lauber J."/>
            <person name="Lazarevic V."/>
            <person name="Lee S.-M."/>
            <person name="Levine A."/>
            <person name="Liu H."/>
            <person name="Masuda S."/>
            <person name="Mauel C."/>
            <person name="Medigue C."/>
            <person name="Medina N."/>
            <person name="Mellado R.P."/>
            <person name="Mizuno M."/>
            <person name="Moestl D."/>
            <person name="Nakai S."/>
            <person name="Noback M."/>
            <person name="Noone D."/>
            <person name="O'Reilly M."/>
            <person name="Ogawa K."/>
            <person name="Ogiwara A."/>
            <person name="Oudega B."/>
            <person name="Park S.-H."/>
            <person name="Parro V."/>
            <person name="Pohl T.M."/>
            <person name="Portetelle D."/>
            <person name="Porwollik S."/>
            <person name="Prescott A.M."/>
            <person name="Presecan E."/>
            <person name="Pujic P."/>
            <person name="Purnelle B."/>
            <person name="Rapoport G."/>
            <person name="Rey M."/>
            <person name="Reynolds S."/>
            <person name="Rieger M."/>
            <person name="Rivolta C."/>
            <person name="Rocha E."/>
            <person name="Roche B."/>
            <person name="Rose M."/>
            <person name="Sadaie Y."/>
            <person name="Sato T."/>
            <person name="Scanlan E."/>
            <person name="Schleich S."/>
            <person name="Schroeter R."/>
            <person name="Scoffone F."/>
            <person name="Sekiguchi J."/>
            <person name="Sekowska A."/>
            <person name="Seror S.J."/>
            <person name="Serror P."/>
            <person name="Shin B.-S."/>
            <person name="Soldo B."/>
            <person name="Sorokin A."/>
            <person name="Tacconi E."/>
            <person name="Takagi T."/>
            <person name="Takahashi H."/>
            <person name="Takemaru K."/>
            <person name="Takeuchi M."/>
            <person name="Tamakoshi A."/>
            <person name="Tanaka T."/>
            <person name="Terpstra P."/>
            <person name="Tognoni A."/>
            <person name="Tosato V."/>
            <person name="Uchiyama S."/>
            <person name="Vandenbol M."/>
            <person name="Vannier F."/>
            <person name="Vassarotti A."/>
            <person name="Viari A."/>
            <person name="Wambutt R."/>
            <person name="Wedler E."/>
            <person name="Wedler H."/>
            <person name="Weitzenegger T."/>
            <person name="Winters P."/>
            <person name="Wipat A."/>
            <person name="Yamamoto H."/>
            <person name="Yamane K."/>
            <person name="Yasumoto K."/>
            <person name="Yata K."/>
            <person name="Yoshida K."/>
            <person name="Yoshikawa H.-F."/>
            <person name="Zumstein E."/>
            <person name="Yoshikawa H."/>
            <person name="Danchin A."/>
        </authorList>
    </citation>
    <scope>NUCLEOTIDE SEQUENCE [LARGE SCALE GENOMIC DNA]</scope>
    <source>
        <strain>168</strain>
    </source>
</reference>
<reference key="4">
    <citation type="journal article" date="1994" name="Eur. J. Biochem.">
        <title>Purification and characterisation of a water-soluble ferrochelatase from Bacillus subtilis.</title>
        <authorList>
            <person name="Hansson M."/>
            <person name="Hederstedt L."/>
        </authorList>
    </citation>
    <scope>FUNCTION</scope>
    <scope>BIOPHYSICOCHEMICAL PROPERTIES</scope>
    <scope>PATHWAY</scope>
    <scope>SUBUNIT</scope>
    <scope>SUBCELLULAR LOCATION</scope>
    <scope>DISRUPTION PHENOTYPE</scope>
    <source>
        <strain>3G18</strain>
    </source>
</reference>
<reference key="5">
    <citation type="journal article" date="2015" name="Proc. Natl. Acad. Sci. U.S.A.">
        <title>Noncanonical coproporphyrin-dependent bacterial heme biosynthesis pathway that does not use protoporphyrin.</title>
        <authorList>
            <person name="Dailey H.A."/>
            <person name="Gerdes S."/>
            <person name="Dailey T.A."/>
            <person name="Burch J.S."/>
            <person name="Phillips J.D."/>
        </authorList>
    </citation>
    <scope>FUNCTION</scope>
    <scope>CATALYTIC ACTIVITY</scope>
    <scope>BIOPHYSICOCHEMICAL PROPERTIES</scope>
    <scope>PATHWAY</scope>
</reference>
<reference key="6">
    <citation type="journal article" date="2015" name="Arch. Biochem. Biophys.">
        <title>HemQ: An iron-coproporphyrin oxidative decarboxylase for protoheme synthesis in Firmicutes and Actinobacteria.</title>
        <authorList>
            <person name="Dailey H.A."/>
            <person name="Gerdes S."/>
        </authorList>
    </citation>
    <scope>PATHWAY</scope>
    <scope>REVIEW</scope>
</reference>
<reference key="7">
    <citation type="journal article" date="2015" name="Mol. Microbiol.">
        <title>Staphylococcus aureus haem biosynthesis: characterisation of the enzymes involved in final steps of the pathway.</title>
        <authorList>
            <person name="Lobo S.A."/>
            <person name="Scott A."/>
            <person name="Videira M.A."/>
            <person name="Winpenny D."/>
            <person name="Gardner M."/>
            <person name="Palmer M.J."/>
            <person name="Schroeder S."/>
            <person name="Lawrence A.D."/>
            <person name="Parkinson T."/>
            <person name="Warren M.J."/>
            <person name="Saraiva L.M."/>
        </authorList>
    </citation>
    <scope>FUNCTION</scope>
    <scope>CATALYTIC ACTIVITY</scope>
    <scope>BIOPHYSICOCHEMICAL PROPERTIES</scope>
</reference>
<reference key="8">
    <citation type="journal article" date="2015" name="PLoS ONE">
        <title>Molecular insights into frataxin-mediated iron supply for heme biosynthesis in Bacillus subtilis.</title>
        <authorList>
            <person name="Mielcarek A."/>
            <person name="Blauenburg B."/>
            <person name="Miethke M."/>
            <person name="Marahiel M.A."/>
        </authorList>
    </citation>
    <scope>FUNCTION</scope>
    <scope>INTERACTION WITH FRA</scope>
    <source>
        <strain>168</strain>
    </source>
</reference>
<reference key="9">
    <citation type="journal article" date="2017" name="Microbiol. Mol. Biol. Rev.">
        <title>Prokaryotic heme biosynthesis: multiple pathways to a common essential product.</title>
        <authorList>
            <person name="Dailey H.A."/>
            <person name="Dailey T.A."/>
            <person name="Gerdes S."/>
            <person name="Jahn D."/>
            <person name="Jahn M."/>
            <person name="O'Brian M.R."/>
            <person name="Warren M.J."/>
        </authorList>
    </citation>
    <scope>NOMENCLATURE</scope>
    <scope>REVIEW</scope>
</reference>
<reference key="10">
    <citation type="journal article" date="1997" name="Proteins">
        <title>Structure prediction and fold recognition for the ferrochelatase family of proteins.</title>
        <authorList>
            <person name="Hansson M."/>
            <person name="Gough S.P."/>
            <person name="Brody S.S."/>
        </authorList>
    </citation>
    <scope>3D-STRUCTURE MODELING</scope>
</reference>
<reference evidence="22" key="11">
    <citation type="journal article" date="1997" name="Structure">
        <title>Crystal structure of ferrochelatase: the terminal enzyme in heme biosynthesis.</title>
        <authorList>
            <person name="Al-Karadaghi S."/>
            <person name="Hansson M."/>
            <person name="Nikonov S."/>
            <person name="Jonsson B."/>
            <person name="Hederstedt L."/>
        </authorList>
    </citation>
    <scope>X-RAY CRYSTALLOGRAPHY (1.9 ANGSTROMS)</scope>
</reference>
<reference evidence="23 24 25" key="12">
    <citation type="journal article" date="2000" name="J. Mol. Biol.">
        <title>Structural and mechanistic basis of porphyrin metallation by ferrochelatase.</title>
        <authorList>
            <person name="Lecerof D."/>
            <person name="Fodje M."/>
            <person name="Hansson A."/>
            <person name="Hansson M."/>
            <person name="Al-Karadaghi S."/>
        </authorList>
    </citation>
    <scope>X-RAY CRYSTALLOGRAPHY (1.80 ANGSTROMS) OF 2-310 IN COMPLEXES WITH N-METHYLMESOPORPHYRIN INHIBITOR; COPPER AND MAGNESIUM</scope>
    <scope>ACTIVITY REGULATION</scope>
</reference>
<reference evidence="26 27" key="13">
    <citation type="journal article" date="2003" name="J. Biol. Inorg. Chem.">
        <title>Metal binding to Bacillus subtilis ferrochelatase and interaction between metal sites.</title>
        <authorList>
            <person name="Lecerof D."/>
            <person name="Fodje M.N."/>
            <person name="Alvarez Leon R."/>
            <person name="Olsson U."/>
            <person name="Hansson A."/>
            <person name="Sigfridsson E."/>
            <person name="Ryde U."/>
            <person name="Hansson M."/>
            <person name="Al-Karadaghi S."/>
        </authorList>
    </citation>
    <scope>X-RAY CRYSTALLOGRAPHY (2.00 ANGSTROMS) IN COMPLEXES WITH ZINC; MAGNESIUM AND CADMIUM</scope>
    <scope>FUNCTION</scope>
    <scope>ACTIVITY REGULATION</scope>
    <scope>MUTAGENESIS OF GLU-272</scope>
</reference>
<reference evidence="28 29" key="14">
    <citation type="journal article" date="2005" name="J. Mol. Biol.">
        <title>Metallation of the transition-state inhibitor N-methyl mesoporphyrin by ferrochelatase: implications for the catalytic reaction mechanism.</title>
        <authorList>
            <person name="Shipovskov S."/>
            <person name="Karlberg T."/>
            <person name="Fodje M."/>
            <person name="Hansson M.D."/>
            <person name="Ferreira G.C."/>
            <person name="Hansson M."/>
            <person name="Reimann C.T."/>
            <person name="Al-Karadaghi S."/>
        </authorList>
    </citation>
    <scope>X-RAY CRYSTALLOGRAPHY (2.10 ANGSTROMS) OF 2-310 OF PHE-13 AND CYS-183 MUTANTS IN COMPLEXES WITH ZINC</scope>
    <scope>FUNCTION</scope>
    <scope>ACTIVITY REGULATION</scope>
    <scope>MUTAGENESIS OF TYR-13 AND HIS-183</scope>
</reference>
<reference evidence="30 31 32" key="15">
    <citation type="journal article" date="2007" name="Biochemistry">
        <title>Amino acid residues His183 and Glu264 in Bacillus subtilis ferrochelatase direct and facilitate the insertion of metal ion into protoporphyrin IX.</title>
        <authorList>
            <person name="Hansson M.D."/>
            <person name="Karlberg T."/>
            <person name="Rahardja M.A."/>
            <person name="Al-Karadaghi S."/>
            <person name="Hansson M."/>
        </authorList>
    </citation>
    <scope>X-RAY CRYSTALLOGRAPHY (1.20 ANGSTROMS) OF WILD-TYPE AND MUTANTS ALA-87 AND ALA-183 IN COMPLEXES WITH IRON AND MAGNESIUM</scope>
    <scope>MUTAGENESIS OF LYS-87; HIS-88; HIS-183 AND GLU-264</scope>
</reference>
<reference evidence="33 34 35" key="16">
    <citation type="journal article" date="2008" name="J. Mol. Biol.">
        <title>Porphyrin binding and distortion and substrate specificity in the ferrochelatase reaction: the role of active site residues.</title>
        <authorList>
            <person name="Karlberg T."/>
            <person name="Hansson M.D."/>
            <person name="Yengo R.K."/>
            <person name="Johansson R."/>
            <person name="Thorvaldsen H.O."/>
            <person name="Ferreira G.C."/>
            <person name="Hansson M."/>
            <person name="Al-Karadaghi S."/>
        </authorList>
    </citation>
    <scope>X-RAY CRYSTALLOGRAPHY (1.80 ANGSTROMS) OF 2-310 OF WILD-TYPE AND MUTANTS ALA-183 AND CYS-183 IN COMPLEXES WITH MAGNESIUM; N-METHYLMESOPORPHYRIN INHIBITOR AND 2,4-DISULFONIC ACID DEUTEROPORPHYRIN IX INHIBITOR</scope>
    <scope>ACTIVITY REGULATION</scope>
</reference>
<reference evidence="36 37" key="17">
    <citation type="journal article" date="2011" name="J. Biol. Inorg. Chem.">
        <title>Bacterial ferrochelatase turns human: Tyr13 determines the apparent metal specificity of Bacillus subtilis ferrochelatase.</title>
        <authorList>
            <person name="Hansson M.D."/>
            <person name="Karlberg T."/>
            <person name="Soederberg C.A."/>
            <person name="Rajan S."/>
            <person name="Warren M.J."/>
            <person name="Al-Karadaghi S."/>
            <person name="Rigby S.E."/>
            <person name="Hansson M."/>
        </authorList>
    </citation>
    <scope>X-RAY CRYSTALLOGRAPHY (1.60 ANGSTROMS) OF 2-310 OF WILD-TYPE IN COMPLEX WITH COBALT AND MAGNESIUM AND MUTANT MET-13 IN COMPLEX WITH MAGNESIUM</scope>
    <scope>FUNCTION</scope>
    <scope>MUTAGENESIS OF TYR-13</scope>
</reference>
<accession>P32396</accession>
<gene>
    <name evidence="1 14" type="primary">cpfC</name>
    <name type="synonym">hemF</name>
    <name evidence="13" type="synonym">hemH</name>
    <name type="ordered locus">BSU10130</name>
</gene>
<keyword id="KW-0002">3D-structure</keyword>
<keyword id="KW-0963">Cytoplasm</keyword>
<keyword id="KW-0350">Heme biosynthesis</keyword>
<keyword id="KW-0408">Iron</keyword>
<keyword id="KW-0456">Lyase</keyword>
<keyword id="KW-0460">Magnesium</keyword>
<keyword id="KW-0479">Metal-binding</keyword>
<keyword id="KW-0627">Porphyrin biosynthesis</keyword>
<keyword id="KW-1185">Reference proteome</keyword>
<proteinExistence type="evidence at protein level"/>
<organism>
    <name type="scientific">Bacillus subtilis (strain 168)</name>
    <dbReference type="NCBI Taxonomy" id="224308"/>
    <lineage>
        <taxon>Bacteria</taxon>
        <taxon>Bacillati</taxon>
        <taxon>Bacillota</taxon>
        <taxon>Bacilli</taxon>
        <taxon>Bacillales</taxon>
        <taxon>Bacillaceae</taxon>
        <taxon>Bacillus</taxon>
    </lineage>
</organism>
<comment type="function">
    <text evidence="3 4 5 8 9 10 11 12">Involved in coproporphyrin-dependent heme b biosynthesis (PubMed:25646457, PubMed:25908396). Catalyzes the insertion of ferrous iron into coproporphyrin III to form Fe-coproporphyrin III (PubMed:25646457, PubMed:25908396). It can also insert iron into protoporphyrin IX (PubMed:1459957, PubMed:21052751, PubMed:25646457, PubMed:8119288). Has weaker activity with 2,4 disulfonate, deuteroporphyrin and 2,4 hydroxyethyl (PubMed:12761666, PubMed:25646457). In vitro, can also use Zn(2+) or Cu(2+) (PubMed:12761666, PubMed:16140324, PubMed:21052751, PubMed:8119288).</text>
</comment>
<comment type="catalytic activity">
    <reaction evidence="1 9 11">
        <text>Fe-coproporphyrin III + 2 H(+) = coproporphyrin III + Fe(2+)</text>
        <dbReference type="Rhea" id="RHEA:49572"/>
        <dbReference type="ChEBI" id="CHEBI:15378"/>
        <dbReference type="ChEBI" id="CHEBI:29033"/>
        <dbReference type="ChEBI" id="CHEBI:68438"/>
        <dbReference type="ChEBI" id="CHEBI:131725"/>
        <dbReference type="EC" id="4.99.1.9"/>
    </reaction>
    <physiologicalReaction direction="right-to-left" evidence="1 9 11">
        <dbReference type="Rhea" id="RHEA:49574"/>
    </physiologicalReaction>
</comment>
<comment type="activity regulation">
    <text evidence="2 3 5 7">Stimulated by Mg(2+) (PubMed:12761666). Inhibited by Cd(2+) (PubMed:12761666). Inhibited by N-methylmesoporphyrin (N-MeMP) and 2,4-disulfonic acid deuteroporphyrin IX (dSDP) (PubMed:10704318, PubMed:16140324, PubMed:18423489).</text>
</comment>
<comment type="biophysicochemical properties">
    <kinetics>
        <KM evidence="9">7.8 uM for coproporphyrin III</KM>
        <KM evidence="11">0.15 uM for Fe(2+)</KM>
        <KM evidence="12">17 uM for Zn(2+)</KM>
        <KM evidence="12">170 uM for Cu(2+)</KM>
        <text evidence="9 11">kcat is 0.11 min(-1) with coproporphyrin III as substrate (PubMed:25646457). kcat is 78 min(-1) with Fe(2+) as substrate (PubMed:25908396).</text>
    </kinetics>
    <phDependence>
        <text evidence="12">Optimum pH is 7.2 with Zn(2+) and protoporphyrin IX as substrates.</text>
    </phDependence>
</comment>
<comment type="pathway">
    <text evidence="1 4 9 12 21">Porphyrin-containing compound metabolism; protoheme biosynthesis.</text>
</comment>
<comment type="subunit">
    <text evidence="10 12">Monomer (PubMed:8119288). Interacts with frataxin/Fra (PubMed:25826316).</text>
</comment>
<comment type="subcellular location">
    <subcellularLocation>
        <location evidence="1 12">Cytoplasm</location>
    </subcellularLocation>
</comment>
<comment type="disruption phenotype">
    <text evidence="12">Deletion mutant requires hemin for growth.</text>
</comment>
<comment type="similarity">
    <text evidence="1 16">Belongs to the ferrochelatase family.</text>
</comment>